<gene>
    <name evidence="1" type="primary">glyA</name>
    <name type="ordered locus">Cbei_1868</name>
</gene>
<accession>A6LUK9</accession>
<feature type="chain" id="PRO_1000074890" description="Serine hydroxymethyltransferase">
    <location>
        <begin position="1"/>
        <end position="411"/>
    </location>
</feature>
<feature type="binding site" evidence="1">
    <location>
        <position position="119"/>
    </location>
    <ligand>
        <name>(6S)-5,6,7,8-tetrahydrofolate</name>
        <dbReference type="ChEBI" id="CHEBI:57453"/>
    </ligand>
</feature>
<feature type="binding site" evidence="1">
    <location>
        <begin position="123"/>
        <end position="125"/>
    </location>
    <ligand>
        <name>(6S)-5,6,7,8-tetrahydrofolate</name>
        <dbReference type="ChEBI" id="CHEBI:57453"/>
    </ligand>
</feature>
<feature type="binding site" evidence="1">
    <location>
        <begin position="351"/>
        <end position="353"/>
    </location>
    <ligand>
        <name>(6S)-5,6,7,8-tetrahydrofolate</name>
        <dbReference type="ChEBI" id="CHEBI:57453"/>
    </ligand>
</feature>
<feature type="site" description="Plays an important role in substrate specificity" evidence="1">
    <location>
        <position position="227"/>
    </location>
</feature>
<feature type="modified residue" description="N6-(pyridoxal phosphate)lysine" evidence="1">
    <location>
        <position position="228"/>
    </location>
</feature>
<comment type="function">
    <text evidence="1">Catalyzes the reversible interconversion of serine and glycine with tetrahydrofolate (THF) serving as the one-carbon carrier. This reaction serves as the major source of one-carbon groups required for the biosynthesis of purines, thymidylate, methionine, and other important biomolecules. Also exhibits THF-independent aldolase activity toward beta-hydroxyamino acids, producing glycine and aldehydes, via a retro-aldol mechanism.</text>
</comment>
<comment type="catalytic activity">
    <reaction evidence="1">
        <text>(6R)-5,10-methylene-5,6,7,8-tetrahydrofolate + glycine + H2O = (6S)-5,6,7,8-tetrahydrofolate + L-serine</text>
        <dbReference type="Rhea" id="RHEA:15481"/>
        <dbReference type="ChEBI" id="CHEBI:15377"/>
        <dbReference type="ChEBI" id="CHEBI:15636"/>
        <dbReference type="ChEBI" id="CHEBI:33384"/>
        <dbReference type="ChEBI" id="CHEBI:57305"/>
        <dbReference type="ChEBI" id="CHEBI:57453"/>
        <dbReference type="EC" id="2.1.2.1"/>
    </reaction>
</comment>
<comment type="cofactor">
    <cofactor evidence="1">
        <name>pyridoxal 5'-phosphate</name>
        <dbReference type="ChEBI" id="CHEBI:597326"/>
    </cofactor>
</comment>
<comment type="pathway">
    <text evidence="1">One-carbon metabolism; tetrahydrofolate interconversion.</text>
</comment>
<comment type="pathway">
    <text evidence="1">Amino-acid biosynthesis; glycine biosynthesis; glycine from L-serine: step 1/1.</text>
</comment>
<comment type="subunit">
    <text evidence="1">Homodimer.</text>
</comment>
<comment type="subcellular location">
    <subcellularLocation>
        <location evidence="1">Cytoplasm</location>
    </subcellularLocation>
</comment>
<comment type="similarity">
    <text evidence="1">Belongs to the SHMT family.</text>
</comment>
<dbReference type="EC" id="2.1.2.1" evidence="1"/>
<dbReference type="EMBL" id="CP000721">
    <property type="protein sequence ID" value="ABR34039.1"/>
    <property type="molecule type" value="Genomic_DNA"/>
</dbReference>
<dbReference type="RefSeq" id="WP_011969191.1">
    <property type="nucleotide sequence ID" value="NC_009617.1"/>
</dbReference>
<dbReference type="SMR" id="A6LUK9"/>
<dbReference type="KEGG" id="cbe:Cbei_1868"/>
<dbReference type="eggNOG" id="COG0112">
    <property type="taxonomic scope" value="Bacteria"/>
</dbReference>
<dbReference type="HOGENOM" id="CLU_022477_2_1_9"/>
<dbReference type="UniPathway" id="UPA00193"/>
<dbReference type="UniPathway" id="UPA00288">
    <property type="reaction ID" value="UER01023"/>
</dbReference>
<dbReference type="Proteomes" id="UP000000565">
    <property type="component" value="Chromosome"/>
</dbReference>
<dbReference type="GO" id="GO:0005829">
    <property type="term" value="C:cytosol"/>
    <property type="evidence" value="ECO:0007669"/>
    <property type="project" value="TreeGrafter"/>
</dbReference>
<dbReference type="GO" id="GO:0004372">
    <property type="term" value="F:glycine hydroxymethyltransferase activity"/>
    <property type="evidence" value="ECO:0007669"/>
    <property type="project" value="UniProtKB-UniRule"/>
</dbReference>
<dbReference type="GO" id="GO:0030170">
    <property type="term" value="F:pyridoxal phosphate binding"/>
    <property type="evidence" value="ECO:0007669"/>
    <property type="project" value="UniProtKB-UniRule"/>
</dbReference>
<dbReference type="GO" id="GO:0019264">
    <property type="term" value="P:glycine biosynthetic process from serine"/>
    <property type="evidence" value="ECO:0007669"/>
    <property type="project" value="UniProtKB-UniRule"/>
</dbReference>
<dbReference type="GO" id="GO:0035999">
    <property type="term" value="P:tetrahydrofolate interconversion"/>
    <property type="evidence" value="ECO:0007669"/>
    <property type="project" value="UniProtKB-UniRule"/>
</dbReference>
<dbReference type="CDD" id="cd00378">
    <property type="entry name" value="SHMT"/>
    <property type="match status" value="1"/>
</dbReference>
<dbReference type="FunFam" id="3.40.640.10:FF:000001">
    <property type="entry name" value="Serine hydroxymethyltransferase"/>
    <property type="match status" value="1"/>
</dbReference>
<dbReference type="FunFam" id="3.90.1150.10:FF:000003">
    <property type="entry name" value="Serine hydroxymethyltransferase"/>
    <property type="match status" value="1"/>
</dbReference>
<dbReference type="Gene3D" id="3.90.1150.10">
    <property type="entry name" value="Aspartate Aminotransferase, domain 1"/>
    <property type="match status" value="1"/>
</dbReference>
<dbReference type="Gene3D" id="3.40.640.10">
    <property type="entry name" value="Type I PLP-dependent aspartate aminotransferase-like (Major domain)"/>
    <property type="match status" value="1"/>
</dbReference>
<dbReference type="HAMAP" id="MF_00051">
    <property type="entry name" value="SHMT"/>
    <property type="match status" value="1"/>
</dbReference>
<dbReference type="InterPro" id="IPR015424">
    <property type="entry name" value="PyrdxlP-dep_Trfase"/>
</dbReference>
<dbReference type="InterPro" id="IPR015421">
    <property type="entry name" value="PyrdxlP-dep_Trfase_major"/>
</dbReference>
<dbReference type="InterPro" id="IPR015422">
    <property type="entry name" value="PyrdxlP-dep_Trfase_small"/>
</dbReference>
<dbReference type="InterPro" id="IPR001085">
    <property type="entry name" value="Ser_HO-MeTrfase"/>
</dbReference>
<dbReference type="InterPro" id="IPR049943">
    <property type="entry name" value="Ser_HO-MeTrfase-like"/>
</dbReference>
<dbReference type="InterPro" id="IPR019798">
    <property type="entry name" value="Ser_HO-MeTrfase_PLP_BS"/>
</dbReference>
<dbReference type="InterPro" id="IPR039429">
    <property type="entry name" value="SHMT-like_dom"/>
</dbReference>
<dbReference type="NCBIfam" id="NF000586">
    <property type="entry name" value="PRK00011.1"/>
    <property type="match status" value="1"/>
</dbReference>
<dbReference type="PANTHER" id="PTHR11680">
    <property type="entry name" value="SERINE HYDROXYMETHYLTRANSFERASE"/>
    <property type="match status" value="1"/>
</dbReference>
<dbReference type="PANTHER" id="PTHR11680:SF35">
    <property type="entry name" value="SERINE HYDROXYMETHYLTRANSFERASE 1"/>
    <property type="match status" value="1"/>
</dbReference>
<dbReference type="Pfam" id="PF00464">
    <property type="entry name" value="SHMT"/>
    <property type="match status" value="1"/>
</dbReference>
<dbReference type="PIRSF" id="PIRSF000412">
    <property type="entry name" value="SHMT"/>
    <property type="match status" value="1"/>
</dbReference>
<dbReference type="SUPFAM" id="SSF53383">
    <property type="entry name" value="PLP-dependent transferases"/>
    <property type="match status" value="1"/>
</dbReference>
<dbReference type="PROSITE" id="PS00096">
    <property type="entry name" value="SHMT"/>
    <property type="match status" value="1"/>
</dbReference>
<proteinExistence type="inferred from homology"/>
<name>GLYA_CLOB8</name>
<reference key="1">
    <citation type="submission" date="2007-06" db="EMBL/GenBank/DDBJ databases">
        <title>Complete sequence of Clostridium beijerinckii NCIMB 8052.</title>
        <authorList>
            <consortium name="US DOE Joint Genome Institute"/>
            <person name="Copeland A."/>
            <person name="Lucas S."/>
            <person name="Lapidus A."/>
            <person name="Barry K."/>
            <person name="Detter J.C."/>
            <person name="Glavina del Rio T."/>
            <person name="Hammon N."/>
            <person name="Israni S."/>
            <person name="Dalin E."/>
            <person name="Tice H."/>
            <person name="Pitluck S."/>
            <person name="Sims D."/>
            <person name="Brettin T."/>
            <person name="Bruce D."/>
            <person name="Tapia R."/>
            <person name="Brainard J."/>
            <person name="Schmutz J."/>
            <person name="Larimer F."/>
            <person name="Land M."/>
            <person name="Hauser L."/>
            <person name="Kyrpides N."/>
            <person name="Mikhailova N."/>
            <person name="Bennet G."/>
            <person name="Cann I."/>
            <person name="Chen J.-S."/>
            <person name="Contreras A.L."/>
            <person name="Jones D."/>
            <person name="Kashket E."/>
            <person name="Mitchell W."/>
            <person name="Stoddard S."/>
            <person name="Schwarz W."/>
            <person name="Qureshi N."/>
            <person name="Young M."/>
            <person name="Shi Z."/>
            <person name="Ezeji T."/>
            <person name="White B."/>
            <person name="Blaschek H."/>
            <person name="Richardson P."/>
        </authorList>
    </citation>
    <scope>NUCLEOTIDE SEQUENCE [LARGE SCALE GENOMIC DNA]</scope>
    <source>
        <strain>ATCC 51743 / NCIMB 8052</strain>
    </source>
</reference>
<organism>
    <name type="scientific">Clostridium beijerinckii (strain ATCC 51743 / NCIMB 8052)</name>
    <name type="common">Clostridium acetobutylicum</name>
    <dbReference type="NCBI Taxonomy" id="290402"/>
    <lineage>
        <taxon>Bacteria</taxon>
        <taxon>Bacillati</taxon>
        <taxon>Bacillota</taxon>
        <taxon>Clostridia</taxon>
        <taxon>Eubacteriales</taxon>
        <taxon>Clostridiaceae</taxon>
        <taxon>Clostridium</taxon>
    </lineage>
</organism>
<protein>
    <recommendedName>
        <fullName evidence="1">Serine hydroxymethyltransferase</fullName>
        <shortName evidence="1">SHMT</shortName>
        <shortName evidence="1">Serine methylase</shortName>
        <ecNumber evidence="1">2.1.2.1</ecNumber>
    </recommendedName>
</protein>
<sequence length="411" mass="44986">MNFENIQREDKEIYDLIEKELVRQQKGIELIASENIVSPAVMEAMGSYLTNKYAEGYPNKRYYGGCHVVDEIEQIAIDRAKELFGAEHANVQPHSGSQANMAVYFAVLEPGDTVLGMDLSHGGHLTHGSPVNFSGKLFNFVSYGVDKETEMIDYENVRKLAIENKPKLIVAGASAYARILDFPKFREIADEVGALLMVDMAHIAGLVAAGVHPSPVPYSDFVTTTTHKTLRGPRGGLILCKEKYAQILNKNIFPGIQGGPLEHIIAAKAVCFKEALDPSFKTYGENVVENCKELAEQLIARGFKIVSGGTDNHVFLVDLNNKDITGKEAEALLDSVGITVNKNTVPNETRSPFVTSGIRIGTAAITTRGFVKDDMAEIAAVISEAIENRDGDLSALKTRIETLCDKHPLYN</sequence>
<keyword id="KW-0028">Amino-acid biosynthesis</keyword>
<keyword id="KW-0963">Cytoplasm</keyword>
<keyword id="KW-0554">One-carbon metabolism</keyword>
<keyword id="KW-0663">Pyridoxal phosphate</keyword>
<keyword id="KW-0808">Transferase</keyword>
<evidence type="ECO:0000255" key="1">
    <source>
        <dbReference type="HAMAP-Rule" id="MF_00051"/>
    </source>
</evidence>